<name>NUOB_EDWI9</name>
<dbReference type="EC" id="7.1.1.-" evidence="1"/>
<dbReference type="EMBL" id="CP001600">
    <property type="protein sequence ID" value="ACR69846.1"/>
    <property type="molecule type" value="Genomic_DNA"/>
</dbReference>
<dbReference type="RefSeq" id="WP_012849213.1">
    <property type="nucleotide sequence ID" value="NZ_CP169062.1"/>
</dbReference>
<dbReference type="SMR" id="C5B8I5"/>
<dbReference type="STRING" id="67780.B6E78_05390"/>
<dbReference type="KEGG" id="eic:NT01EI_2678"/>
<dbReference type="HOGENOM" id="CLU_055737_7_3_6"/>
<dbReference type="OrthoDB" id="9786737at2"/>
<dbReference type="Proteomes" id="UP000001485">
    <property type="component" value="Chromosome"/>
</dbReference>
<dbReference type="GO" id="GO:0005886">
    <property type="term" value="C:plasma membrane"/>
    <property type="evidence" value="ECO:0007669"/>
    <property type="project" value="UniProtKB-SubCell"/>
</dbReference>
<dbReference type="GO" id="GO:0045271">
    <property type="term" value="C:respiratory chain complex I"/>
    <property type="evidence" value="ECO:0007669"/>
    <property type="project" value="TreeGrafter"/>
</dbReference>
<dbReference type="GO" id="GO:0051539">
    <property type="term" value="F:4 iron, 4 sulfur cluster binding"/>
    <property type="evidence" value="ECO:0007669"/>
    <property type="project" value="UniProtKB-KW"/>
</dbReference>
<dbReference type="GO" id="GO:0005506">
    <property type="term" value="F:iron ion binding"/>
    <property type="evidence" value="ECO:0007669"/>
    <property type="project" value="UniProtKB-UniRule"/>
</dbReference>
<dbReference type="GO" id="GO:0008137">
    <property type="term" value="F:NADH dehydrogenase (ubiquinone) activity"/>
    <property type="evidence" value="ECO:0007669"/>
    <property type="project" value="InterPro"/>
</dbReference>
<dbReference type="GO" id="GO:0050136">
    <property type="term" value="F:NADH:ubiquinone reductase (non-electrogenic) activity"/>
    <property type="evidence" value="ECO:0007669"/>
    <property type="project" value="UniProtKB-UniRule"/>
</dbReference>
<dbReference type="GO" id="GO:0048038">
    <property type="term" value="F:quinone binding"/>
    <property type="evidence" value="ECO:0007669"/>
    <property type="project" value="UniProtKB-KW"/>
</dbReference>
<dbReference type="GO" id="GO:0009060">
    <property type="term" value="P:aerobic respiration"/>
    <property type="evidence" value="ECO:0007669"/>
    <property type="project" value="TreeGrafter"/>
</dbReference>
<dbReference type="GO" id="GO:0015990">
    <property type="term" value="P:electron transport coupled proton transport"/>
    <property type="evidence" value="ECO:0007669"/>
    <property type="project" value="TreeGrafter"/>
</dbReference>
<dbReference type="FunFam" id="3.40.50.12280:FF:000002">
    <property type="entry name" value="NADH-quinone oxidoreductase subunit B"/>
    <property type="match status" value="1"/>
</dbReference>
<dbReference type="Gene3D" id="3.40.50.12280">
    <property type="match status" value="1"/>
</dbReference>
<dbReference type="HAMAP" id="MF_01356">
    <property type="entry name" value="NDH1_NuoB"/>
    <property type="match status" value="1"/>
</dbReference>
<dbReference type="InterPro" id="IPR006137">
    <property type="entry name" value="NADH_UbQ_OxRdtase-like_20kDa"/>
</dbReference>
<dbReference type="InterPro" id="IPR006138">
    <property type="entry name" value="NADH_UQ_OxRdtase_20Kd_su"/>
</dbReference>
<dbReference type="NCBIfam" id="TIGR01957">
    <property type="entry name" value="nuoB_fam"/>
    <property type="match status" value="1"/>
</dbReference>
<dbReference type="NCBIfam" id="NF005012">
    <property type="entry name" value="PRK06411.1"/>
    <property type="match status" value="1"/>
</dbReference>
<dbReference type="PANTHER" id="PTHR11995">
    <property type="entry name" value="NADH DEHYDROGENASE"/>
    <property type="match status" value="1"/>
</dbReference>
<dbReference type="PANTHER" id="PTHR11995:SF14">
    <property type="entry name" value="NADH DEHYDROGENASE [UBIQUINONE] IRON-SULFUR PROTEIN 7, MITOCHONDRIAL"/>
    <property type="match status" value="1"/>
</dbReference>
<dbReference type="Pfam" id="PF01058">
    <property type="entry name" value="Oxidored_q6"/>
    <property type="match status" value="1"/>
</dbReference>
<dbReference type="SUPFAM" id="SSF56770">
    <property type="entry name" value="HydA/Nqo6-like"/>
    <property type="match status" value="1"/>
</dbReference>
<dbReference type="PROSITE" id="PS01150">
    <property type="entry name" value="COMPLEX1_20K"/>
    <property type="match status" value="1"/>
</dbReference>
<gene>
    <name evidence="1" type="primary">nuoB</name>
    <name type="ordered locus">NT01EI_2678</name>
</gene>
<evidence type="ECO:0000255" key="1">
    <source>
        <dbReference type="HAMAP-Rule" id="MF_01356"/>
    </source>
</evidence>
<proteinExistence type="inferred from homology"/>
<accession>C5B8I5</accession>
<feature type="chain" id="PRO_1000214859" description="NADH-quinone oxidoreductase subunit B">
    <location>
        <begin position="1"/>
        <end position="224"/>
    </location>
</feature>
<feature type="binding site" evidence="1">
    <location>
        <position position="67"/>
    </location>
    <ligand>
        <name>[4Fe-4S] cluster</name>
        <dbReference type="ChEBI" id="CHEBI:49883"/>
    </ligand>
</feature>
<feature type="binding site" evidence="1">
    <location>
        <position position="68"/>
    </location>
    <ligand>
        <name>[4Fe-4S] cluster</name>
        <dbReference type="ChEBI" id="CHEBI:49883"/>
    </ligand>
</feature>
<feature type="binding site" evidence="1">
    <location>
        <position position="133"/>
    </location>
    <ligand>
        <name>[4Fe-4S] cluster</name>
        <dbReference type="ChEBI" id="CHEBI:49883"/>
    </ligand>
</feature>
<feature type="binding site" evidence="1">
    <location>
        <position position="162"/>
    </location>
    <ligand>
        <name>[4Fe-4S] cluster</name>
        <dbReference type="ChEBI" id="CHEBI:49883"/>
    </ligand>
</feature>
<protein>
    <recommendedName>
        <fullName evidence="1">NADH-quinone oxidoreductase subunit B</fullName>
        <ecNumber evidence="1">7.1.1.-</ecNumber>
    </recommendedName>
    <alternativeName>
        <fullName evidence="1">NADH dehydrogenase I subunit B</fullName>
    </alternativeName>
    <alternativeName>
        <fullName evidence="1">NDH-1 subunit B</fullName>
    </alternativeName>
</protein>
<comment type="function">
    <text evidence="1">NDH-1 shuttles electrons from NADH, via FMN and iron-sulfur (Fe-S) centers, to quinones in the respiratory chain. The immediate electron acceptor for the enzyme in this species is believed to be ubiquinone. Couples the redox reaction to proton translocation (for every two electrons transferred, four hydrogen ions are translocated across the cytoplasmic membrane), and thus conserves the redox energy in a proton gradient.</text>
</comment>
<comment type="catalytic activity">
    <reaction evidence="1">
        <text>a quinone + NADH + 5 H(+)(in) = a quinol + NAD(+) + 4 H(+)(out)</text>
        <dbReference type="Rhea" id="RHEA:57888"/>
        <dbReference type="ChEBI" id="CHEBI:15378"/>
        <dbReference type="ChEBI" id="CHEBI:24646"/>
        <dbReference type="ChEBI" id="CHEBI:57540"/>
        <dbReference type="ChEBI" id="CHEBI:57945"/>
        <dbReference type="ChEBI" id="CHEBI:132124"/>
    </reaction>
</comment>
<comment type="cofactor">
    <cofactor evidence="1">
        <name>[4Fe-4S] cluster</name>
        <dbReference type="ChEBI" id="CHEBI:49883"/>
    </cofactor>
    <text evidence="1">Binds 1 [4Fe-4S] cluster.</text>
</comment>
<comment type="subunit">
    <text evidence="1">NDH-1 is composed of 13 different subunits. Subunits NuoB, CD, E, F, and G constitute the peripheral sector of the complex.</text>
</comment>
<comment type="subcellular location">
    <subcellularLocation>
        <location evidence="1">Cell inner membrane</location>
        <topology evidence="1">Peripheral membrane protein</topology>
        <orientation evidence="1">Cytoplasmic side</orientation>
    </subcellularLocation>
</comment>
<comment type="similarity">
    <text evidence="1">Belongs to the complex I 20 kDa subunit family.</text>
</comment>
<keyword id="KW-0004">4Fe-4S</keyword>
<keyword id="KW-0997">Cell inner membrane</keyword>
<keyword id="KW-1003">Cell membrane</keyword>
<keyword id="KW-0408">Iron</keyword>
<keyword id="KW-0411">Iron-sulfur</keyword>
<keyword id="KW-0472">Membrane</keyword>
<keyword id="KW-0479">Metal-binding</keyword>
<keyword id="KW-0520">NAD</keyword>
<keyword id="KW-0874">Quinone</keyword>
<keyword id="KW-1278">Translocase</keyword>
<keyword id="KW-0813">Transport</keyword>
<keyword id="KW-0830">Ubiquinone</keyword>
<reference key="1">
    <citation type="submission" date="2009-03" db="EMBL/GenBank/DDBJ databases">
        <title>Complete genome sequence of Edwardsiella ictaluri 93-146.</title>
        <authorList>
            <person name="Williams M.L."/>
            <person name="Gillaspy A.F."/>
            <person name="Dyer D.W."/>
            <person name="Thune R.L."/>
            <person name="Waldbieser G.C."/>
            <person name="Schuster S.C."/>
            <person name="Gipson J."/>
            <person name="Zaitshik J."/>
            <person name="Landry C."/>
            <person name="Lawrence M.L."/>
        </authorList>
    </citation>
    <scope>NUCLEOTIDE SEQUENCE [LARGE SCALE GENOMIC DNA]</scope>
    <source>
        <strain>93-146</strain>
    </source>
</reference>
<sequence>MDYTLTRIDPDGDNDRYPLQKQEVVSDPLEQHVHRSVYMGKLDHALHDMVNWGRKNSLWPYNFGLSCCYVEMVTSFTAVHDVARFGAEVLRASPRQADFMVVAGTCFTKMAPVIQRLYEQMLEPKWVISMGACANSGGMYDIYSVVQGVDKFIPVDVYIPGCPPRPEAYMQALMLLQESIGQERRPLSWVVGDQGVYRANMQSERERKRAERIAVTNLRTPDEI</sequence>
<organism>
    <name type="scientific">Edwardsiella ictaluri (strain 93-146)</name>
    <dbReference type="NCBI Taxonomy" id="634503"/>
    <lineage>
        <taxon>Bacteria</taxon>
        <taxon>Pseudomonadati</taxon>
        <taxon>Pseudomonadota</taxon>
        <taxon>Gammaproteobacteria</taxon>
        <taxon>Enterobacterales</taxon>
        <taxon>Hafniaceae</taxon>
        <taxon>Edwardsiella</taxon>
    </lineage>
</organism>